<keyword id="KW-0131">Cell cycle</keyword>
<keyword id="KW-0132">Cell division</keyword>
<keyword id="KW-0963">Cytoplasm</keyword>
<keyword id="KW-1185">Reference proteome</keyword>
<keyword id="KW-0717">Septation</keyword>
<dbReference type="EMBL" id="BA000022">
    <property type="protein sequence ID" value="BAA17407.1"/>
    <property type="molecule type" value="Genomic_DNA"/>
</dbReference>
<dbReference type="PIR" id="S77560">
    <property type="entry name" value="S77560"/>
</dbReference>
<dbReference type="SMR" id="P73376"/>
<dbReference type="FunCoup" id="P73376">
    <property type="interactions" value="8"/>
</dbReference>
<dbReference type="IntAct" id="P73376">
    <property type="interactions" value="6"/>
</dbReference>
<dbReference type="STRING" id="1148.gene:10498270"/>
<dbReference type="PaxDb" id="1148-1652485"/>
<dbReference type="EnsemblBacteria" id="BAA17407">
    <property type="protein sequence ID" value="BAA17407"/>
    <property type="gene ID" value="BAA17407"/>
</dbReference>
<dbReference type="KEGG" id="syn:slr2073"/>
<dbReference type="eggNOG" id="COG1799">
    <property type="taxonomic scope" value="Bacteria"/>
</dbReference>
<dbReference type="InParanoid" id="P73376"/>
<dbReference type="Proteomes" id="UP000001425">
    <property type="component" value="Chromosome"/>
</dbReference>
<dbReference type="GO" id="GO:0030428">
    <property type="term" value="C:cell septum"/>
    <property type="evidence" value="ECO:0000314"/>
    <property type="project" value="CACAO"/>
</dbReference>
<dbReference type="GO" id="GO:0005737">
    <property type="term" value="C:cytoplasm"/>
    <property type="evidence" value="ECO:0007669"/>
    <property type="project" value="UniProtKB-SubCell"/>
</dbReference>
<dbReference type="GO" id="GO:0000917">
    <property type="term" value="P:division septum assembly"/>
    <property type="evidence" value="ECO:0007669"/>
    <property type="project" value="UniProtKB-KW"/>
</dbReference>
<dbReference type="GO" id="GO:0043093">
    <property type="term" value="P:FtsZ-dependent cytokinesis"/>
    <property type="evidence" value="ECO:0007669"/>
    <property type="project" value="UniProtKB-UniRule"/>
</dbReference>
<dbReference type="Gene3D" id="3.30.110.150">
    <property type="entry name" value="SepF-like protein"/>
    <property type="match status" value="1"/>
</dbReference>
<dbReference type="HAMAP" id="MF_01197">
    <property type="entry name" value="SepF"/>
    <property type="match status" value="1"/>
</dbReference>
<dbReference type="InterPro" id="IPR023052">
    <property type="entry name" value="Cell_div_SepF"/>
</dbReference>
<dbReference type="InterPro" id="IPR007561">
    <property type="entry name" value="Cell_div_SepF/SepF-rel"/>
</dbReference>
<dbReference type="InterPro" id="IPR038594">
    <property type="entry name" value="SepF-like_sf"/>
</dbReference>
<dbReference type="PANTHER" id="PTHR35798">
    <property type="entry name" value="CELL DIVISION PROTEIN SEPF"/>
    <property type="match status" value="1"/>
</dbReference>
<dbReference type="PANTHER" id="PTHR35798:SF1">
    <property type="entry name" value="CELL DIVISION PROTEIN SEPF"/>
    <property type="match status" value="1"/>
</dbReference>
<dbReference type="Pfam" id="PF04472">
    <property type="entry name" value="SepF"/>
    <property type="match status" value="1"/>
</dbReference>
<name>SEPF_SYNY3</name>
<comment type="function">
    <text evidence="1">Cell division protein that is part of the divisome complex and is recruited early to the Z-ring. Probably stimulates Z-ring formation, perhaps through the cross-linking of FtsZ protofilaments. Its function overlaps with FtsA.</text>
</comment>
<comment type="subunit">
    <text evidence="1">Homodimer. Interacts with FtsZ.</text>
</comment>
<comment type="interaction">
    <interactant intactId="EBI-1613816">
        <id>P73376</id>
    </interactant>
    <interactant intactId="EBI-591951">
        <id>Q55559</id>
        <label>sll0169</label>
    </interactant>
    <organismsDiffer>false</organismsDiffer>
    <experiments>2</experiments>
</comment>
<comment type="subcellular location">
    <subcellularLocation>
        <location evidence="1">Cytoplasm</location>
    </subcellularLocation>
    <text evidence="1">Localizes to the division site, in a FtsZ-dependent manner.</text>
</comment>
<comment type="similarity">
    <text evidence="1">Belongs to the SepF family.</text>
</comment>
<feature type="chain" id="PRO_0000217379" description="Cell division protein SepF">
    <location>
        <begin position="1"/>
        <end position="186"/>
    </location>
</feature>
<feature type="region of interest" description="Disordered" evidence="2">
    <location>
        <begin position="14"/>
        <end position="59"/>
    </location>
</feature>
<feature type="region of interest" description="Disordered" evidence="2">
    <location>
        <begin position="157"/>
        <end position="186"/>
    </location>
</feature>
<feature type="compositionally biased region" description="Acidic residues" evidence="2">
    <location>
        <begin position="16"/>
        <end position="27"/>
    </location>
</feature>
<feature type="compositionally biased region" description="Low complexity" evidence="2">
    <location>
        <begin position="159"/>
        <end position="171"/>
    </location>
</feature>
<sequence>MILTKLKDFVGISEHDEYEEDYDEEMEFPQSVASQPPAEEVAPPPRISREPLSLNNETSIGTGVRNNVIGMPGINNSVAEVVVVEPHSFDEMPQVIQTLRERKSVVLNLNVMDPEEAQRAVDFVAGGTFAMDGHQERIGESIFLFTPNCVKVSSLAGRSQESNETSSSVSSDNFPTWGYETSRLAQ</sequence>
<organism>
    <name type="scientific">Synechocystis sp. (strain ATCC 27184 / PCC 6803 / Kazusa)</name>
    <dbReference type="NCBI Taxonomy" id="1111708"/>
    <lineage>
        <taxon>Bacteria</taxon>
        <taxon>Bacillati</taxon>
        <taxon>Cyanobacteriota</taxon>
        <taxon>Cyanophyceae</taxon>
        <taxon>Synechococcales</taxon>
        <taxon>Merismopediaceae</taxon>
        <taxon>Synechocystis</taxon>
    </lineage>
</organism>
<protein>
    <recommendedName>
        <fullName evidence="1">Cell division protein SepF</fullName>
    </recommendedName>
</protein>
<gene>
    <name evidence="1" type="primary">sepF</name>
    <name type="ordered locus">slr2073</name>
</gene>
<reference key="1">
    <citation type="journal article" date="1996" name="DNA Res.">
        <title>Sequence analysis of the genome of the unicellular cyanobacterium Synechocystis sp. strain PCC6803. II. Sequence determination of the entire genome and assignment of potential protein-coding regions.</title>
        <authorList>
            <person name="Kaneko T."/>
            <person name="Sato S."/>
            <person name="Kotani H."/>
            <person name="Tanaka A."/>
            <person name="Asamizu E."/>
            <person name="Nakamura Y."/>
            <person name="Miyajima N."/>
            <person name="Hirosawa M."/>
            <person name="Sugiura M."/>
            <person name="Sasamoto S."/>
            <person name="Kimura T."/>
            <person name="Hosouchi T."/>
            <person name="Matsuno A."/>
            <person name="Muraki A."/>
            <person name="Nakazaki N."/>
            <person name="Naruo K."/>
            <person name="Okumura S."/>
            <person name="Shimpo S."/>
            <person name="Takeuchi C."/>
            <person name="Wada T."/>
            <person name="Watanabe A."/>
            <person name="Yamada M."/>
            <person name="Yasuda M."/>
            <person name="Tabata S."/>
        </authorList>
    </citation>
    <scope>NUCLEOTIDE SEQUENCE [LARGE SCALE GENOMIC DNA]</scope>
    <source>
        <strain>ATCC 27184 / PCC 6803 / Kazusa</strain>
    </source>
</reference>
<accession>P73376</accession>
<proteinExistence type="evidence at protein level"/>
<evidence type="ECO:0000255" key="1">
    <source>
        <dbReference type="HAMAP-Rule" id="MF_01197"/>
    </source>
</evidence>
<evidence type="ECO:0000256" key="2">
    <source>
        <dbReference type="SAM" id="MobiDB-lite"/>
    </source>
</evidence>